<proteinExistence type="inferred from homology"/>
<evidence type="ECO:0000255" key="1">
    <source>
        <dbReference type="HAMAP-Rule" id="MF_01345"/>
    </source>
</evidence>
<evidence type="ECO:0000305" key="2"/>
<comment type="function">
    <text evidence="1">One of the primary rRNA binding proteins, it binds specifically to the 5'-end of 16S ribosomal RNA.</text>
</comment>
<comment type="subunit">
    <text evidence="1">Part of the 30S ribosomal subunit.</text>
</comment>
<comment type="similarity">
    <text evidence="1">Belongs to the universal ribosomal protein uS17 family.</text>
</comment>
<keyword id="KW-0687">Ribonucleoprotein</keyword>
<keyword id="KW-0689">Ribosomal protein</keyword>
<keyword id="KW-0694">RNA-binding</keyword>
<keyword id="KW-0699">rRNA-binding</keyword>
<sequence length="94" mass="10722">MSEKTVTETNTDRGFRKTREGLVVSDKMDKTVVVAVEDRVKHALYGKVIRRTNKLKAHDEQNSAGVGDRVLIMETRPLSASKRWRIVEILEKAK</sequence>
<dbReference type="EMBL" id="AP009493">
    <property type="protein sequence ID" value="BAG19654.1"/>
    <property type="molecule type" value="Genomic_DNA"/>
</dbReference>
<dbReference type="RefSeq" id="WP_003966951.1">
    <property type="nucleotide sequence ID" value="NC_010572.1"/>
</dbReference>
<dbReference type="SMR" id="B1W3Z8"/>
<dbReference type="GeneID" id="91368033"/>
<dbReference type="KEGG" id="sgr:SGR_2825"/>
<dbReference type="eggNOG" id="COG0186">
    <property type="taxonomic scope" value="Bacteria"/>
</dbReference>
<dbReference type="HOGENOM" id="CLU_073626_1_0_11"/>
<dbReference type="Proteomes" id="UP000001685">
    <property type="component" value="Chromosome"/>
</dbReference>
<dbReference type="GO" id="GO:0022627">
    <property type="term" value="C:cytosolic small ribosomal subunit"/>
    <property type="evidence" value="ECO:0007669"/>
    <property type="project" value="TreeGrafter"/>
</dbReference>
<dbReference type="GO" id="GO:0019843">
    <property type="term" value="F:rRNA binding"/>
    <property type="evidence" value="ECO:0007669"/>
    <property type="project" value="UniProtKB-UniRule"/>
</dbReference>
<dbReference type="GO" id="GO:0003735">
    <property type="term" value="F:structural constituent of ribosome"/>
    <property type="evidence" value="ECO:0007669"/>
    <property type="project" value="InterPro"/>
</dbReference>
<dbReference type="GO" id="GO:0006412">
    <property type="term" value="P:translation"/>
    <property type="evidence" value="ECO:0007669"/>
    <property type="project" value="UniProtKB-UniRule"/>
</dbReference>
<dbReference type="CDD" id="cd00364">
    <property type="entry name" value="Ribosomal_uS17"/>
    <property type="match status" value="1"/>
</dbReference>
<dbReference type="Gene3D" id="2.40.50.140">
    <property type="entry name" value="Nucleic acid-binding proteins"/>
    <property type="match status" value="1"/>
</dbReference>
<dbReference type="HAMAP" id="MF_01345_B">
    <property type="entry name" value="Ribosomal_uS17_B"/>
    <property type="match status" value="1"/>
</dbReference>
<dbReference type="InterPro" id="IPR012340">
    <property type="entry name" value="NA-bd_OB-fold"/>
</dbReference>
<dbReference type="InterPro" id="IPR000266">
    <property type="entry name" value="Ribosomal_uS17"/>
</dbReference>
<dbReference type="InterPro" id="IPR019984">
    <property type="entry name" value="Ribosomal_uS17_bact/chlr"/>
</dbReference>
<dbReference type="InterPro" id="IPR019979">
    <property type="entry name" value="Ribosomal_uS17_CS"/>
</dbReference>
<dbReference type="NCBIfam" id="NF004123">
    <property type="entry name" value="PRK05610.1"/>
    <property type="match status" value="1"/>
</dbReference>
<dbReference type="NCBIfam" id="TIGR03635">
    <property type="entry name" value="uS17_bact"/>
    <property type="match status" value="1"/>
</dbReference>
<dbReference type="PANTHER" id="PTHR10744">
    <property type="entry name" value="40S RIBOSOMAL PROTEIN S11 FAMILY MEMBER"/>
    <property type="match status" value="1"/>
</dbReference>
<dbReference type="PANTHER" id="PTHR10744:SF1">
    <property type="entry name" value="SMALL RIBOSOMAL SUBUNIT PROTEIN US17M"/>
    <property type="match status" value="1"/>
</dbReference>
<dbReference type="Pfam" id="PF00366">
    <property type="entry name" value="Ribosomal_S17"/>
    <property type="match status" value="1"/>
</dbReference>
<dbReference type="PRINTS" id="PR00973">
    <property type="entry name" value="RIBOSOMALS17"/>
</dbReference>
<dbReference type="SUPFAM" id="SSF50249">
    <property type="entry name" value="Nucleic acid-binding proteins"/>
    <property type="match status" value="1"/>
</dbReference>
<dbReference type="PROSITE" id="PS00056">
    <property type="entry name" value="RIBOSOMAL_S17"/>
    <property type="match status" value="1"/>
</dbReference>
<feature type="chain" id="PRO_1000143306" description="Small ribosomal subunit protein uS17">
    <location>
        <begin position="1"/>
        <end position="94"/>
    </location>
</feature>
<organism>
    <name type="scientific">Streptomyces griseus subsp. griseus (strain JCM 4626 / CBS 651.72 / NBRC 13350 / KCC S-0626 / ISP 5235)</name>
    <dbReference type="NCBI Taxonomy" id="455632"/>
    <lineage>
        <taxon>Bacteria</taxon>
        <taxon>Bacillati</taxon>
        <taxon>Actinomycetota</taxon>
        <taxon>Actinomycetes</taxon>
        <taxon>Kitasatosporales</taxon>
        <taxon>Streptomycetaceae</taxon>
        <taxon>Streptomyces</taxon>
    </lineage>
</organism>
<accession>B1W3Z8</accession>
<reference key="1">
    <citation type="journal article" date="2008" name="J. Bacteriol.">
        <title>Genome sequence of the streptomycin-producing microorganism Streptomyces griseus IFO 13350.</title>
        <authorList>
            <person name="Ohnishi Y."/>
            <person name="Ishikawa J."/>
            <person name="Hara H."/>
            <person name="Suzuki H."/>
            <person name="Ikenoya M."/>
            <person name="Ikeda H."/>
            <person name="Yamashita A."/>
            <person name="Hattori M."/>
            <person name="Horinouchi S."/>
        </authorList>
    </citation>
    <scope>NUCLEOTIDE SEQUENCE [LARGE SCALE GENOMIC DNA]</scope>
    <source>
        <strain>JCM 4626 / CBS 651.72 / NBRC 13350 / KCC S-0626 / ISP 5235</strain>
    </source>
</reference>
<protein>
    <recommendedName>
        <fullName evidence="1">Small ribosomal subunit protein uS17</fullName>
    </recommendedName>
    <alternativeName>
        <fullName evidence="2">30S ribosomal protein S17</fullName>
    </alternativeName>
</protein>
<name>RS17_STRGG</name>
<gene>
    <name evidence="1" type="primary">rpsQ</name>
    <name type="ordered locus">SGR_2825</name>
</gene>